<protein>
    <recommendedName>
        <fullName evidence="1">NAD kinase</fullName>
        <ecNumber evidence="1">2.7.1.23</ecNumber>
    </recommendedName>
    <alternativeName>
        <fullName evidence="1">ATP-dependent NAD kinase</fullName>
    </alternativeName>
</protein>
<reference key="1">
    <citation type="journal article" date="2005" name="PLoS Biol.">
        <title>The genome sequence of Rickettsia felis identifies the first putative conjugative plasmid in an obligate intracellular parasite.</title>
        <authorList>
            <person name="Ogata H."/>
            <person name="Renesto P."/>
            <person name="Audic S."/>
            <person name="Robert C."/>
            <person name="Blanc G."/>
            <person name="Fournier P.-E."/>
            <person name="Parinello H."/>
            <person name="Claverie J.-M."/>
            <person name="Raoult D."/>
        </authorList>
    </citation>
    <scope>NUCLEOTIDE SEQUENCE [LARGE SCALE GENOMIC DNA]</scope>
    <source>
        <strain>ATCC VR-1525 / URRWXCal2</strain>
    </source>
</reference>
<evidence type="ECO:0000255" key="1">
    <source>
        <dbReference type="HAMAP-Rule" id="MF_00361"/>
    </source>
</evidence>
<organism>
    <name type="scientific">Rickettsia felis (strain ATCC VR-1525 / URRWXCal2)</name>
    <name type="common">Rickettsia azadi</name>
    <dbReference type="NCBI Taxonomy" id="315456"/>
    <lineage>
        <taxon>Bacteria</taxon>
        <taxon>Pseudomonadati</taxon>
        <taxon>Pseudomonadota</taxon>
        <taxon>Alphaproteobacteria</taxon>
        <taxon>Rickettsiales</taxon>
        <taxon>Rickettsiaceae</taxon>
        <taxon>Rickettsieae</taxon>
        <taxon>Rickettsia</taxon>
        <taxon>spotted fever group</taxon>
    </lineage>
</organism>
<proteinExistence type="inferred from homology"/>
<keyword id="KW-0067">ATP-binding</keyword>
<keyword id="KW-0963">Cytoplasm</keyword>
<keyword id="KW-0418">Kinase</keyword>
<keyword id="KW-0520">NAD</keyword>
<keyword id="KW-0521">NADP</keyword>
<keyword id="KW-0547">Nucleotide-binding</keyword>
<keyword id="KW-0808">Transferase</keyword>
<feature type="chain" id="PRO_0000277993" description="NAD kinase">
    <location>
        <begin position="1"/>
        <end position="255"/>
    </location>
</feature>
<feature type="active site" description="Proton acceptor" evidence="1">
    <location>
        <position position="44"/>
    </location>
</feature>
<feature type="binding site" evidence="1">
    <location>
        <begin position="44"/>
        <end position="45"/>
    </location>
    <ligand>
        <name>NAD(+)</name>
        <dbReference type="ChEBI" id="CHEBI:57540"/>
    </ligand>
</feature>
<feature type="binding site" evidence="1">
    <location>
        <position position="49"/>
    </location>
    <ligand>
        <name>NAD(+)</name>
        <dbReference type="ChEBI" id="CHEBI:57540"/>
    </ligand>
</feature>
<feature type="binding site" evidence="1">
    <location>
        <begin position="114"/>
        <end position="115"/>
    </location>
    <ligand>
        <name>NAD(+)</name>
        <dbReference type="ChEBI" id="CHEBI:57540"/>
    </ligand>
</feature>
<feature type="binding site" evidence="1">
    <location>
        <position position="144"/>
    </location>
    <ligand>
        <name>NAD(+)</name>
        <dbReference type="ChEBI" id="CHEBI:57540"/>
    </ligand>
</feature>
<feature type="binding site" evidence="1">
    <location>
        <position position="152"/>
    </location>
    <ligand>
        <name>NAD(+)</name>
        <dbReference type="ChEBI" id="CHEBI:57540"/>
    </ligand>
</feature>
<feature type="binding site" evidence="1">
    <location>
        <begin position="155"/>
        <end position="160"/>
    </location>
    <ligand>
        <name>NAD(+)</name>
        <dbReference type="ChEBI" id="CHEBI:57540"/>
    </ligand>
</feature>
<feature type="binding site" evidence="1">
    <location>
        <position position="216"/>
    </location>
    <ligand>
        <name>NAD(+)</name>
        <dbReference type="ChEBI" id="CHEBI:57540"/>
    </ligand>
</feature>
<comment type="function">
    <text evidence="1">Involved in the regulation of the intracellular balance of NAD and NADP, and is a key enzyme in the biosynthesis of NADP. Catalyzes specifically the phosphorylation on 2'-hydroxyl of the adenosine moiety of NAD to yield NADP.</text>
</comment>
<comment type="catalytic activity">
    <reaction evidence="1">
        <text>NAD(+) + ATP = ADP + NADP(+) + H(+)</text>
        <dbReference type="Rhea" id="RHEA:18629"/>
        <dbReference type="ChEBI" id="CHEBI:15378"/>
        <dbReference type="ChEBI" id="CHEBI:30616"/>
        <dbReference type="ChEBI" id="CHEBI:57540"/>
        <dbReference type="ChEBI" id="CHEBI:58349"/>
        <dbReference type="ChEBI" id="CHEBI:456216"/>
        <dbReference type="EC" id="2.7.1.23"/>
    </reaction>
</comment>
<comment type="cofactor">
    <cofactor evidence="1">
        <name>a divalent metal cation</name>
        <dbReference type="ChEBI" id="CHEBI:60240"/>
    </cofactor>
</comment>
<comment type="subcellular location">
    <subcellularLocation>
        <location evidence="1">Cytoplasm</location>
    </subcellularLocation>
</comment>
<comment type="similarity">
    <text evidence="1">Belongs to the NAD kinase family.</text>
</comment>
<gene>
    <name evidence="1" type="primary">nadK</name>
    <name type="ordered locus">RF_0675</name>
</gene>
<dbReference type="EC" id="2.7.1.23" evidence="1"/>
<dbReference type="EMBL" id="CP000053">
    <property type="protein sequence ID" value="AAY61526.1"/>
    <property type="molecule type" value="Genomic_DNA"/>
</dbReference>
<dbReference type="SMR" id="Q4ULP7"/>
<dbReference type="STRING" id="315456.RF_0675"/>
<dbReference type="KEGG" id="rfe:RF_0675"/>
<dbReference type="eggNOG" id="COG0061">
    <property type="taxonomic scope" value="Bacteria"/>
</dbReference>
<dbReference type="HOGENOM" id="CLU_073319_0_0_5"/>
<dbReference type="OrthoDB" id="9774737at2"/>
<dbReference type="Proteomes" id="UP000008548">
    <property type="component" value="Chromosome"/>
</dbReference>
<dbReference type="GO" id="GO:0005737">
    <property type="term" value="C:cytoplasm"/>
    <property type="evidence" value="ECO:0007669"/>
    <property type="project" value="UniProtKB-SubCell"/>
</dbReference>
<dbReference type="GO" id="GO:0005524">
    <property type="term" value="F:ATP binding"/>
    <property type="evidence" value="ECO:0007669"/>
    <property type="project" value="UniProtKB-KW"/>
</dbReference>
<dbReference type="GO" id="GO:0046872">
    <property type="term" value="F:metal ion binding"/>
    <property type="evidence" value="ECO:0007669"/>
    <property type="project" value="UniProtKB-UniRule"/>
</dbReference>
<dbReference type="GO" id="GO:0051287">
    <property type="term" value="F:NAD binding"/>
    <property type="evidence" value="ECO:0007669"/>
    <property type="project" value="UniProtKB-ARBA"/>
</dbReference>
<dbReference type="GO" id="GO:0003951">
    <property type="term" value="F:NAD+ kinase activity"/>
    <property type="evidence" value="ECO:0007669"/>
    <property type="project" value="UniProtKB-UniRule"/>
</dbReference>
<dbReference type="GO" id="GO:0019674">
    <property type="term" value="P:NAD metabolic process"/>
    <property type="evidence" value="ECO:0007669"/>
    <property type="project" value="InterPro"/>
</dbReference>
<dbReference type="GO" id="GO:0006741">
    <property type="term" value="P:NADP biosynthetic process"/>
    <property type="evidence" value="ECO:0007669"/>
    <property type="project" value="UniProtKB-UniRule"/>
</dbReference>
<dbReference type="Gene3D" id="3.40.50.10330">
    <property type="entry name" value="Probable inorganic polyphosphate/atp-NAD kinase, domain 1"/>
    <property type="match status" value="1"/>
</dbReference>
<dbReference type="Gene3D" id="2.60.200.30">
    <property type="entry name" value="Probable inorganic polyphosphate/atp-NAD kinase, domain 2"/>
    <property type="match status" value="1"/>
</dbReference>
<dbReference type="HAMAP" id="MF_00361">
    <property type="entry name" value="NAD_kinase"/>
    <property type="match status" value="1"/>
</dbReference>
<dbReference type="InterPro" id="IPR017438">
    <property type="entry name" value="ATP-NAD_kinase_N"/>
</dbReference>
<dbReference type="InterPro" id="IPR017437">
    <property type="entry name" value="ATP-NAD_kinase_PpnK-typ_C"/>
</dbReference>
<dbReference type="InterPro" id="IPR016064">
    <property type="entry name" value="NAD/diacylglycerol_kinase_sf"/>
</dbReference>
<dbReference type="InterPro" id="IPR002504">
    <property type="entry name" value="NADK"/>
</dbReference>
<dbReference type="NCBIfam" id="NF003406">
    <property type="entry name" value="PRK04761.1"/>
    <property type="match status" value="1"/>
</dbReference>
<dbReference type="PANTHER" id="PTHR20275">
    <property type="entry name" value="NAD KINASE"/>
    <property type="match status" value="1"/>
</dbReference>
<dbReference type="PANTHER" id="PTHR20275:SF0">
    <property type="entry name" value="NAD KINASE"/>
    <property type="match status" value="1"/>
</dbReference>
<dbReference type="Pfam" id="PF01513">
    <property type="entry name" value="NAD_kinase"/>
    <property type="match status" value="1"/>
</dbReference>
<dbReference type="Pfam" id="PF20143">
    <property type="entry name" value="NAD_kinase_C"/>
    <property type="match status" value="1"/>
</dbReference>
<dbReference type="SUPFAM" id="SSF111331">
    <property type="entry name" value="NAD kinase/diacylglycerol kinase-like"/>
    <property type="match status" value="1"/>
</dbReference>
<accession>Q4ULP7</accession>
<sequence>MNINKIALIYNQNSKHLAIIEEIKKLYNYCKIEEAEAIIVIGGDGELLHNIHRYMNLNIPFYGVNLGSLGFLMNPLDTKNLLQNIHESTVSILNPLLMQAEDISGQIYTALAINEVSIFRKTNQAAKFRIDVNGIERMSELVADGALVATPAGSSAYNLSAGGPILPLDSNMLCLTPICSFRPRRWHGALLLSSATIKFEILNTNKRPVNATADFQEFNNITNVTVKSTKDKPIKLLFNKNHTLEDRIIKEQFGG</sequence>
<name>NADK_RICFE</name>